<comment type="function">
    <text evidence="1">Presumably involved in the processing and regular turnover of intracellular proteins. Catalyzes the removal of unsubstituted N-terminal amino acids from various peptides.</text>
</comment>
<comment type="catalytic activity">
    <reaction evidence="1">
        <text>Release of an N-terminal amino acid, Xaa-|-Yaa-, in which Xaa is preferably Leu, but may be other amino acids including Pro although not Arg or Lys, and Yaa may be Pro. Amino acid amides and methyl esters are also readily hydrolyzed, but rates on arylamides are exceedingly low.</text>
        <dbReference type="EC" id="3.4.11.1"/>
    </reaction>
</comment>
<comment type="catalytic activity">
    <reaction evidence="1">
        <text>Release of an N-terminal amino acid, preferentially leucine, but not glutamic or aspartic acids.</text>
        <dbReference type="EC" id="3.4.11.10"/>
    </reaction>
</comment>
<comment type="cofactor">
    <cofactor evidence="1">
        <name>Mn(2+)</name>
        <dbReference type="ChEBI" id="CHEBI:29035"/>
    </cofactor>
    <text evidence="1">Binds 2 manganese ions per subunit.</text>
</comment>
<comment type="subcellular location">
    <subcellularLocation>
        <location evidence="1">Cytoplasm</location>
    </subcellularLocation>
</comment>
<comment type="similarity">
    <text evidence="1">Belongs to the peptidase M17 family.</text>
</comment>
<proteinExistence type="inferred from homology"/>
<reference key="1">
    <citation type="journal article" date="2008" name="J. Bacteriol.">
        <title>Genome sequence of the chemolithoautotrophic bacterium Oligotropha carboxidovorans OM5T.</title>
        <authorList>
            <person name="Paul D."/>
            <person name="Bridges S."/>
            <person name="Burgess S.C."/>
            <person name="Dandass Y."/>
            <person name="Lawrence M.L."/>
        </authorList>
    </citation>
    <scope>NUCLEOTIDE SEQUENCE [LARGE SCALE GENOMIC DNA]</scope>
    <source>
        <strain>ATCC 49405 / DSM 1227 / KCTC 32145 / OM5</strain>
    </source>
</reference>
<reference key="2">
    <citation type="journal article" date="2011" name="J. Bacteriol.">
        <title>Complete genome sequences of the chemolithoautotrophic Oligotropha carboxidovorans strains OM4 and OM5.</title>
        <authorList>
            <person name="Volland S."/>
            <person name="Rachinger M."/>
            <person name="Strittmatter A."/>
            <person name="Daniel R."/>
            <person name="Gottschalk G."/>
            <person name="Meyer O."/>
        </authorList>
    </citation>
    <scope>NUCLEOTIDE SEQUENCE [LARGE SCALE GENOMIC DNA]</scope>
    <source>
        <strain>ATCC 49405 / DSM 1227 / KCTC 32145 / OM5</strain>
    </source>
</reference>
<organism>
    <name type="scientific">Afipia carboxidovorans (strain ATCC 49405 / DSM 1227 / KCTC 32145 / OM5)</name>
    <name type="common">Oligotropha carboxidovorans</name>
    <dbReference type="NCBI Taxonomy" id="504832"/>
    <lineage>
        <taxon>Bacteria</taxon>
        <taxon>Pseudomonadati</taxon>
        <taxon>Pseudomonadota</taxon>
        <taxon>Alphaproteobacteria</taxon>
        <taxon>Hyphomicrobiales</taxon>
        <taxon>Nitrobacteraceae</taxon>
        <taxon>Afipia</taxon>
    </lineage>
</organism>
<accession>B6JGL8</accession>
<accession>F8BRM4</accession>
<keyword id="KW-0031">Aminopeptidase</keyword>
<keyword id="KW-0963">Cytoplasm</keyword>
<keyword id="KW-0378">Hydrolase</keyword>
<keyword id="KW-0464">Manganese</keyword>
<keyword id="KW-0479">Metal-binding</keyword>
<keyword id="KW-0645">Protease</keyword>
<keyword id="KW-1185">Reference proteome</keyword>
<gene>
    <name evidence="1" type="primary">pepA</name>
    <name type="ordered locus">OCAR_6352</name>
    <name type="ordered locus">OCA5_c16900</name>
</gene>
<sequence>MTDAVKVGFVPLSTAPKGVLVVFTDESMKFGPASRKHLVNAGDVVKRAAAAAEFKGKSGSALDILAPQGVKAARLIVVGTGKAGSVKDEDFIKLGGTATGKIGSNASAVTLVAELPGGAMKPHQAAALAVGARLRGYKFDRYKTKTKDKDKALVAQFSVAVADVAAARKAFIRDAHVANGVVLARELVNEPPNVLYPAEFARRAAQLRKLGVKVEIFDVKAMEKLGMGALLGVSQGSYHPGRMVVMRWNGASNKADKPVAFVGKGVCFDTGGISIKPAGSMEEMKGDMAGAACVVGLMHALAARKAKVNAVGAIGIVENMPDGNAQRPGDIVKTMSGQTIEIINTDAEGRLVLADVLWYVTQKHKPKFIVDLATLTGAILVALGTEYAGLFSNNDQLSERLSKSGDATGERVWRMPLGPEFDKQIDSKFADMKNAAGRWGGSITAAQLLQRFVDNTPWAHLDIAGTAMGAPATDINTSWGSGYGVRLLDHLVAQHYETKR</sequence>
<dbReference type="EC" id="3.4.11.1" evidence="1"/>
<dbReference type="EC" id="3.4.11.10" evidence="1"/>
<dbReference type="EMBL" id="CP001196">
    <property type="protein sequence ID" value="ACI93465.1"/>
    <property type="molecule type" value="Genomic_DNA"/>
</dbReference>
<dbReference type="EMBL" id="CP002826">
    <property type="protein sequence ID" value="AEI06404.1"/>
    <property type="molecule type" value="Genomic_DNA"/>
</dbReference>
<dbReference type="RefSeq" id="WP_012563491.1">
    <property type="nucleotide sequence ID" value="NC_015684.1"/>
</dbReference>
<dbReference type="SMR" id="B6JGL8"/>
<dbReference type="STRING" id="504832.OCA5_c16900"/>
<dbReference type="KEGG" id="oca:OCAR_6352"/>
<dbReference type="KEGG" id="ocg:OCA5_c16900"/>
<dbReference type="PATRIC" id="fig|504832.7.peg.1804"/>
<dbReference type="eggNOG" id="COG0260">
    <property type="taxonomic scope" value="Bacteria"/>
</dbReference>
<dbReference type="HOGENOM" id="CLU_013734_6_0_5"/>
<dbReference type="OrthoDB" id="9809354at2"/>
<dbReference type="Proteomes" id="UP000007730">
    <property type="component" value="Chromosome"/>
</dbReference>
<dbReference type="GO" id="GO:0005737">
    <property type="term" value="C:cytoplasm"/>
    <property type="evidence" value="ECO:0007669"/>
    <property type="project" value="UniProtKB-SubCell"/>
</dbReference>
<dbReference type="GO" id="GO:0030145">
    <property type="term" value="F:manganese ion binding"/>
    <property type="evidence" value="ECO:0007669"/>
    <property type="project" value="UniProtKB-UniRule"/>
</dbReference>
<dbReference type="GO" id="GO:0070006">
    <property type="term" value="F:metalloaminopeptidase activity"/>
    <property type="evidence" value="ECO:0007669"/>
    <property type="project" value="InterPro"/>
</dbReference>
<dbReference type="GO" id="GO:0006508">
    <property type="term" value="P:proteolysis"/>
    <property type="evidence" value="ECO:0007669"/>
    <property type="project" value="UniProtKB-KW"/>
</dbReference>
<dbReference type="CDD" id="cd00433">
    <property type="entry name" value="Peptidase_M17"/>
    <property type="match status" value="1"/>
</dbReference>
<dbReference type="Gene3D" id="3.40.220.10">
    <property type="entry name" value="Leucine Aminopeptidase, subunit E, domain 1"/>
    <property type="match status" value="1"/>
</dbReference>
<dbReference type="Gene3D" id="3.40.630.10">
    <property type="entry name" value="Zn peptidases"/>
    <property type="match status" value="1"/>
</dbReference>
<dbReference type="HAMAP" id="MF_00181">
    <property type="entry name" value="Cytosol_peptidase_M17"/>
    <property type="match status" value="1"/>
</dbReference>
<dbReference type="InterPro" id="IPR011356">
    <property type="entry name" value="Leucine_aapep/pepB"/>
</dbReference>
<dbReference type="InterPro" id="IPR043472">
    <property type="entry name" value="Macro_dom-like"/>
</dbReference>
<dbReference type="InterPro" id="IPR000819">
    <property type="entry name" value="Peptidase_M17_C"/>
</dbReference>
<dbReference type="InterPro" id="IPR023042">
    <property type="entry name" value="Peptidase_M17_leu_NH2_pept"/>
</dbReference>
<dbReference type="InterPro" id="IPR008283">
    <property type="entry name" value="Peptidase_M17_N"/>
</dbReference>
<dbReference type="NCBIfam" id="NF002073">
    <property type="entry name" value="PRK00913.1-2"/>
    <property type="match status" value="1"/>
</dbReference>
<dbReference type="NCBIfam" id="NF002074">
    <property type="entry name" value="PRK00913.1-4"/>
    <property type="match status" value="1"/>
</dbReference>
<dbReference type="NCBIfam" id="NF002075">
    <property type="entry name" value="PRK00913.2-2"/>
    <property type="match status" value="1"/>
</dbReference>
<dbReference type="NCBIfam" id="NF002077">
    <property type="entry name" value="PRK00913.2-4"/>
    <property type="match status" value="1"/>
</dbReference>
<dbReference type="PANTHER" id="PTHR11963:SF23">
    <property type="entry name" value="CYTOSOL AMINOPEPTIDASE"/>
    <property type="match status" value="1"/>
</dbReference>
<dbReference type="PANTHER" id="PTHR11963">
    <property type="entry name" value="LEUCINE AMINOPEPTIDASE-RELATED"/>
    <property type="match status" value="1"/>
</dbReference>
<dbReference type="Pfam" id="PF00883">
    <property type="entry name" value="Peptidase_M17"/>
    <property type="match status" value="1"/>
</dbReference>
<dbReference type="Pfam" id="PF02789">
    <property type="entry name" value="Peptidase_M17_N"/>
    <property type="match status" value="1"/>
</dbReference>
<dbReference type="PRINTS" id="PR00481">
    <property type="entry name" value="LAMNOPPTDASE"/>
</dbReference>
<dbReference type="SUPFAM" id="SSF52949">
    <property type="entry name" value="Macro domain-like"/>
    <property type="match status" value="1"/>
</dbReference>
<dbReference type="SUPFAM" id="SSF53187">
    <property type="entry name" value="Zn-dependent exopeptidases"/>
    <property type="match status" value="1"/>
</dbReference>
<dbReference type="PROSITE" id="PS00631">
    <property type="entry name" value="CYTOSOL_AP"/>
    <property type="match status" value="1"/>
</dbReference>
<name>AMPA_AFIC5</name>
<evidence type="ECO:0000255" key="1">
    <source>
        <dbReference type="HAMAP-Rule" id="MF_00181"/>
    </source>
</evidence>
<protein>
    <recommendedName>
        <fullName evidence="1">Probable cytosol aminopeptidase</fullName>
        <ecNumber evidence="1">3.4.11.1</ecNumber>
    </recommendedName>
    <alternativeName>
        <fullName evidence="1">Leucine aminopeptidase</fullName>
        <shortName evidence="1">LAP</shortName>
        <ecNumber evidence="1">3.4.11.10</ecNumber>
    </alternativeName>
    <alternativeName>
        <fullName evidence="1">Leucyl aminopeptidase</fullName>
    </alternativeName>
</protein>
<feature type="chain" id="PRO_1000098334" description="Probable cytosol aminopeptidase">
    <location>
        <begin position="1"/>
        <end position="500"/>
    </location>
</feature>
<feature type="active site" evidence="1">
    <location>
        <position position="276"/>
    </location>
</feature>
<feature type="active site" evidence="1">
    <location>
        <position position="350"/>
    </location>
</feature>
<feature type="binding site" evidence="1">
    <location>
        <position position="264"/>
    </location>
    <ligand>
        <name>Mn(2+)</name>
        <dbReference type="ChEBI" id="CHEBI:29035"/>
        <label>2</label>
    </ligand>
</feature>
<feature type="binding site" evidence="1">
    <location>
        <position position="269"/>
    </location>
    <ligand>
        <name>Mn(2+)</name>
        <dbReference type="ChEBI" id="CHEBI:29035"/>
        <label>1</label>
    </ligand>
</feature>
<feature type="binding site" evidence="1">
    <location>
        <position position="269"/>
    </location>
    <ligand>
        <name>Mn(2+)</name>
        <dbReference type="ChEBI" id="CHEBI:29035"/>
        <label>2</label>
    </ligand>
</feature>
<feature type="binding site" evidence="1">
    <location>
        <position position="287"/>
    </location>
    <ligand>
        <name>Mn(2+)</name>
        <dbReference type="ChEBI" id="CHEBI:29035"/>
        <label>2</label>
    </ligand>
</feature>
<feature type="binding site" evidence="1">
    <location>
        <position position="346"/>
    </location>
    <ligand>
        <name>Mn(2+)</name>
        <dbReference type="ChEBI" id="CHEBI:29035"/>
        <label>1</label>
    </ligand>
</feature>
<feature type="binding site" evidence="1">
    <location>
        <position position="348"/>
    </location>
    <ligand>
        <name>Mn(2+)</name>
        <dbReference type="ChEBI" id="CHEBI:29035"/>
        <label>1</label>
    </ligand>
</feature>
<feature type="binding site" evidence="1">
    <location>
        <position position="348"/>
    </location>
    <ligand>
        <name>Mn(2+)</name>
        <dbReference type="ChEBI" id="CHEBI:29035"/>
        <label>2</label>
    </ligand>
</feature>